<dbReference type="EC" id="2.7.2.3" evidence="2"/>
<dbReference type="EMBL" id="AF042738">
    <property type="protein sequence ID" value="AAC13267.1"/>
    <property type="molecule type" value="mRNA"/>
</dbReference>
<dbReference type="RefSeq" id="NP_001191644.1">
    <property type="nucleotide sequence ID" value="NM_001204715.1"/>
</dbReference>
<dbReference type="SMR" id="O61471"/>
<dbReference type="GeneID" id="101859700"/>
<dbReference type="OrthoDB" id="275353at2759"/>
<dbReference type="UniPathway" id="UPA00109">
    <property type="reaction ID" value="UER00185"/>
</dbReference>
<dbReference type="Proteomes" id="UP000694888">
    <property type="component" value="Unplaced"/>
</dbReference>
<dbReference type="GO" id="GO:0005829">
    <property type="term" value="C:cytosol"/>
    <property type="evidence" value="ECO:0007669"/>
    <property type="project" value="TreeGrafter"/>
</dbReference>
<dbReference type="GO" id="GO:0043531">
    <property type="term" value="F:ADP binding"/>
    <property type="evidence" value="ECO:0007669"/>
    <property type="project" value="TreeGrafter"/>
</dbReference>
<dbReference type="GO" id="GO:0005524">
    <property type="term" value="F:ATP binding"/>
    <property type="evidence" value="ECO:0000250"/>
    <property type="project" value="UniProtKB"/>
</dbReference>
<dbReference type="GO" id="GO:0046872">
    <property type="term" value="F:metal ion binding"/>
    <property type="evidence" value="ECO:0007669"/>
    <property type="project" value="UniProtKB-KW"/>
</dbReference>
<dbReference type="GO" id="GO:0004618">
    <property type="term" value="F:phosphoglycerate kinase activity"/>
    <property type="evidence" value="ECO:0000250"/>
    <property type="project" value="UniProtKB"/>
</dbReference>
<dbReference type="GO" id="GO:0006094">
    <property type="term" value="P:gluconeogenesis"/>
    <property type="evidence" value="ECO:0007669"/>
    <property type="project" value="TreeGrafter"/>
</dbReference>
<dbReference type="GO" id="GO:0006096">
    <property type="term" value="P:glycolytic process"/>
    <property type="evidence" value="ECO:0007669"/>
    <property type="project" value="UniProtKB-UniPathway"/>
</dbReference>
<dbReference type="CDD" id="cd00318">
    <property type="entry name" value="Phosphoglycerate_kinase"/>
    <property type="match status" value="1"/>
</dbReference>
<dbReference type="FunFam" id="3.40.50.1260:FF:000019">
    <property type="entry name" value="Phosphoglycerate kinase 1"/>
    <property type="match status" value="1"/>
</dbReference>
<dbReference type="FunFam" id="3.40.50.1260:FF:000031">
    <property type="entry name" value="Phosphoglycerate kinase 1"/>
    <property type="match status" value="1"/>
</dbReference>
<dbReference type="Gene3D" id="3.40.50.1260">
    <property type="entry name" value="Phosphoglycerate kinase, N-terminal domain"/>
    <property type="match status" value="3"/>
</dbReference>
<dbReference type="HAMAP" id="MF_00145">
    <property type="entry name" value="Phosphoglyc_kinase"/>
    <property type="match status" value="1"/>
</dbReference>
<dbReference type="InterPro" id="IPR001576">
    <property type="entry name" value="Phosphoglycerate_kinase"/>
</dbReference>
<dbReference type="InterPro" id="IPR015911">
    <property type="entry name" value="Phosphoglycerate_kinase_CS"/>
</dbReference>
<dbReference type="InterPro" id="IPR015824">
    <property type="entry name" value="Phosphoglycerate_kinase_N"/>
</dbReference>
<dbReference type="InterPro" id="IPR036043">
    <property type="entry name" value="Phosphoglycerate_kinase_sf"/>
</dbReference>
<dbReference type="PANTHER" id="PTHR11406">
    <property type="entry name" value="PHOSPHOGLYCERATE KINASE"/>
    <property type="match status" value="1"/>
</dbReference>
<dbReference type="PANTHER" id="PTHR11406:SF0">
    <property type="entry name" value="PHOSPHOGLYCERATE KINASE"/>
    <property type="match status" value="1"/>
</dbReference>
<dbReference type="Pfam" id="PF00162">
    <property type="entry name" value="PGK"/>
    <property type="match status" value="1"/>
</dbReference>
<dbReference type="PIRSF" id="PIRSF000724">
    <property type="entry name" value="Pgk"/>
    <property type="match status" value="1"/>
</dbReference>
<dbReference type="PRINTS" id="PR00477">
    <property type="entry name" value="PHGLYCKINASE"/>
</dbReference>
<dbReference type="SUPFAM" id="SSF53748">
    <property type="entry name" value="Phosphoglycerate kinase"/>
    <property type="match status" value="1"/>
</dbReference>
<dbReference type="PROSITE" id="PS00111">
    <property type="entry name" value="PGLYCERATE_KINASE"/>
    <property type="match status" value="1"/>
</dbReference>
<accession>O61471</accession>
<feature type="chain" id="PRO_0000145842" description="Phosphoglycerate kinase">
    <location>
        <begin position="1"/>
        <end position="412"/>
    </location>
</feature>
<feature type="binding site" evidence="2">
    <location>
        <position position="20"/>
    </location>
    <ligand>
        <name>(2R)-3-phosphoglycerate</name>
        <dbReference type="ChEBI" id="CHEBI:58272"/>
    </ligand>
</feature>
<feature type="binding site" evidence="3">
    <location>
        <position position="21"/>
    </location>
    <ligand>
        <name>(2R)-3-phosphoglycerate</name>
        <dbReference type="ChEBI" id="CHEBI:58272"/>
    </ligand>
</feature>
<feature type="binding site" evidence="2">
    <location>
        <position position="22"/>
    </location>
    <ligand>
        <name>(2R)-3-phosphoglycerate</name>
        <dbReference type="ChEBI" id="CHEBI:58272"/>
    </ligand>
</feature>
<feature type="binding site" evidence="3">
    <location>
        <position position="23"/>
    </location>
    <ligand>
        <name>(2R)-3-phosphoglycerate</name>
        <dbReference type="ChEBI" id="CHEBI:58272"/>
    </ligand>
</feature>
<feature type="binding site" evidence="2">
    <location>
        <position position="35"/>
    </location>
    <ligand>
        <name>(2R)-3-phosphoglycerate</name>
        <dbReference type="ChEBI" id="CHEBI:58272"/>
    </ligand>
</feature>
<feature type="binding site" evidence="3">
    <location>
        <position position="36"/>
    </location>
    <ligand>
        <name>(2R)-3-phosphoglycerate</name>
        <dbReference type="ChEBI" id="CHEBI:58272"/>
    </ligand>
</feature>
<feature type="binding site" evidence="2">
    <location>
        <position position="59"/>
    </location>
    <ligand>
        <name>(2R)-3-phosphoglycerate</name>
        <dbReference type="ChEBI" id="CHEBI:58272"/>
    </ligand>
</feature>
<feature type="binding site" evidence="3">
    <location>
        <position position="60"/>
    </location>
    <ligand>
        <name>(2R)-3-phosphoglycerate</name>
        <dbReference type="ChEBI" id="CHEBI:58272"/>
    </ligand>
</feature>
<feature type="binding site" evidence="2">
    <location>
        <position position="62"/>
    </location>
    <ligand>
        <name>(2R)-3-phosphoglycerate</name>
        <dbReference type="ChEBI" id="CHEBI:58272"/>
    </ligand>
</feature>
<feature type="binding site" evidence="3">
    <location>
        <position position="63"/>
    </location>
    <ligand>
        <name>(2R)-3-phosphoglycerate</name>
        <dbReference type="ChEBI" id="CHEBI:58272"/>
    </ligand>
</feature>
<feature type="binding site" evidence="2">
    <location>
        <position position="118"/>
    </location>
    <ligand>
        <name>(2R)-3-phosphoglycerate</name>
        <dbReference type="ChEBI" id="CHEBI:58272"/>
    </ligand>
</feature>
<feature type="binding site" evidence="3">
    <location>
        <position position="119"/>
    </location>
    <ligand>
        <name>(2R)-3-phosphoglycerate</name>
        <dbReference type="ChEBI" id="CHEBI:58272"/>
    </ligand>
</feature>
<feature type="binding site" evidence="2">
    <location>
        <position position="166"/>
    </location>
    <ligand>
        <name>(2R)-3-phosphoglycerate</name>
        <dbReference type="ChEBI" id="CHEBI:58272"/>
    </ligand>
</feature>
<feature type="binding site" evidence="3">
    <location>
        <position position="167"/>
    </location>
    <ligand>
        <name>(2R)-3-phosphoglycerate</name>
        <dbReference type="ChEBI" id="CHEBI:58272"/>
    </ligand>
</feature>
<feature type="binding site" evidence="2">
    <location>
        <position position="210"/>
    </location>
    <ligand>
        <name>ADP</name>
        <dbReference type="ChEBI" id="CHEBI:456216"/>
    </ligand>
</feature>
<feature type="binding site" evidence="2">
    <location>
        <position position="210"/>
    </location>
    <ligand>
        <name>CDP</name>
        <dbReference type="ChEBI" id="CHEBI:58069"/>
    </ligand>
</feature>
<feature type="binding site" evidence="3">
    <location>
        <position position="211"/>
    </location>
    <ligand>
        <name>AMP</name>
        <dbReference type="ChEBI" id="CHEBI:456215"/>
    </ligand>
</feature>
<feature type="binding site" evidence="3">
    <location>
        <position position="211"/>
    </location>
    <ligand>
        <name>ATP</name>
        <dbReference type="ChEBI" id="CHEBI:30616"/>
    </ligand>
</feature>
<feature type="binding site" evidence="2">
    <location>
        <position position="211"/>
    </location>
    <ligand>
        <name>Mg(2+)</name>
        <dbReference type="ChEBI" id="CHEBI:18420"/>
    </ligand>
</feature>
<feature type="binding site" evidence="3">
    <location>
        <position position="212"/>
    </location>
    <ligand>
        <name>AMP</name>
        <dbReference type="ChEBI" id="CHEBI:456215"/>
    </ligand>
</feature>
<feature type="binding site" evidence="2">
    <location>
        <position position="214"/>
    </location>
    <ligand>
        <name>Mg(2+)</name>
        <dbReference type="ChEBI" id="CHEBI:18420"/>
    </ligand>
</feature>
<feature type="binding site" evidence="2">
    <location>
        <position position="215"/>
    </location>
    <ligand>
        <name>CDP</name>
        <dbReference type="ChEBI" id="CHEBI:58069"/>
    </ligand>
</feature>
<feature type="binding site" evidence="2">
    <location>
        <position position="215"/>
    </location>
    <ligand>
        <name>Mg(2+)</name>
        <dbReference type="ChEBI" id="CHEBI:18420"/>
    </ligand>
</feature>
<feature type="binding site" evidence="3">
    <location>
        <position position="216"/>
    </location>
    <ligand>
        <name>AMP</name>
        <dbReference type="ChEBI" id="CHEBI:456215"/>
    </ligand>
</feature>
<feature type="binding site" evidence="3">
    <location>
        <position position="216"/>
    </location>
    <ligand>
        <name>ATP</name>
        <dbReference type="ChEBI" id="CHEBI:30616"/>
    </ligand>
</feature>
<feature type="binding site" evidence="2">
    <location>
        <position position="234"/>
    </location>
    <ligand>
        <name>ADP</name>
        <dbReference type="ChEBI" id="CHEBI:456216"/>
    </ligand>
</feature>
<feature type="binding site" evidence="2">
    <location>
        <position position="234"/>
    </location>
    <ligand>
        <name>CDP</name>
        <dbReference type="ChEBI" id="CHEBI:58069"/>
    </ligand>
</feature>
<feature type="binding site" evidence="3">
    <location>
        <position position="235"/>
    </location>
    <ligand>
        <name>AMP</name>
        <dbReference type="ChEBI" id="CHEBI:456215"/>
    </ligand>
</feature>
<feature type="binding site" evidence="3">
    <location>
        <position position="235"/>
    </location>
    <ligand>
        <name>ATP</name>
        <dbReference type="ChEBI" id="CHEBI:30616"/>
    </ligand>
</feature>
<feature type="binding site" evidence="3">
    <location>
        <position position="308"/>
    </location>
    <ligand>
        <name>AMP</name>
        <dbReference type="ChEBI" id="CHEBI:456215"/>
    </ligand>
</feature>
<feature type="binding site" evidence="3">
    <location>
        <position position="308"/>
    </location>
    <ligand>
        <name>ATP</name>
        <dbReference type="ChEBI" id="CHEBI:30616"/>
    </ligand>
</feature>
<feature type="binding site" evidence="2">
    <location>
        <position position="333"/>
    </location>
    <ligand>
        <name>CDP</name>
        <dbReference type="ChEBI" id="CHEBI:58069"/>
    </ligand>
</feature>
<feature type="binding site" evidence="2">
    <location>
        <position position="338"/>
    </location>
    <ligand>
        <name>ADP</name>
        <dbReference type="ChEBI" id="CHEBI:456216"/>
    </ligand>
</feature>
<feature type="binding site" evidence="2">
    <location>
        <position position="338"/>
    </location>
    <ligand>
        <name>CDP</name>
        <dbReference type="ChEBI" id="CHEBI:58069"/>
    </ligand>
</feature>
<feature type="binding site" evidence="3">
    <location>
        <position position="339"/>
    </location>
    <ligand>
        <name>AMP</name>
        <dbReference type="ChEBI" id="CHEBI:456215"/>
    </ligand>
</feature>
<feature type="binding site" evidence="3">
    <location>
        <position position="339"/>
    </location>
    <ligand>
        <name>ATP</name>
        <dbReference type="ChEBI" id="CHEBI:30616"/>
    </ligand>
</feature>
<feature type="binding site" evidence="3">
    <location>
        <position position="370"/>
    </location>
    <ligand>
        <name>ATP</name>
        <dbReference type="ChEBI" id="CHEBI:30616"/>
    </ligand>
</feature>
<feature type="binding site" evidence="3">
    <location>
        <position position="370"/>
    </location>
    <ligand>
        <name>Mg(2+)</name>
        <dbReference type="ChEBI" id="CHEBI:18420"/>
    </ligand>
</feature>
<feature type="binding site" evidence="3">
    <location>
        <position position="371"/>
    </location>
    <ligand>
        <name>ATP</name>
        <dbReference type="ChEBI" id="CHEBI:30616"/>
    </ligand>
</feature>
<name>PGK_APLCA</name>
<keyword id="KW-0067">ATP-binding</keyword>
<keyword id="KW-0963">Cytoplasm</keyword>
<keyword id="KW-0324">Glycolysis</keyword>
<keyword id="KW-0418">Kinase</keyword>
<keyword id="KW-0460">Magnesium</keyword>
<keyword id="KW-0479">Metal-binding</keyword>
<keyword id="KW-0547">Nucleotide-binding</keyword>
<keyword id="KW-0808">Transferase</keyword>
<evidence type="ECO:0000250" key="1"/>
<evidence type="ECO:0000250" key="2">
    <source>
        <dbReference type="UniProtKB" id="P00558"/>
    </source>
</evidence>
<evidence type="ECO:0000250" key="3">
    <source>
        <dbReference type="UniProtKB" id="Q7SIB7"/>
    </source>
</evidence>
<evidence type="ECO:0000305" key="4"/>
<protein>
    <recommendedName>
        <fullName>Phosphoglycerate kinase</fullName>
        <ecNumber evidence="2">2.7.2.3</ecNumber>
    </recommendedName>
</protein>
<gene>
    <name type="primary">PGK</name>
</gene>
<reference key="1">
    <citation type="journal article" date="1998" name="Learn. Memory">
        <title>Identification of specific mRNAs affected by treatments producing long-term facilitation in Aplysia.</title>
        <authorList>
            <person name="Zwartjes R.E."/>
            <person name="West H."/>
            <person name="Hattar S."/>
            <person name="Ren X."/>
            <person name="Noel F."/>
            <person name="Nunez-Regueiro M."/>
            <person name="Macphee K."/>
            <person name="Homayouni R."/>
            <person name="Crow M.T."/>
            <person name="Byrne J.H."/>
            <person name="Eskin A."/>
        </authorList>
    </citation>
    <scope>NUCLEOTIDE SEQUENCE [MRNA]</scope>
</reference>
<comment type="function">
    <text evidence="2">Catalyzes one of the two ATP producing reactions in the glycolytic pathway via the reversible conversion of 1,3-diphosphoglycerate to 3-phosphoglycerate. In addition to its role as a glycolytic enzyme, it seems that PGK-1 acts as a polymerase alpha cofactor protein (primer recognition protein). May play a role in sperm motility.</text>
</comment>
<comment type="catalytic activity">
    <reaction evidence="2">
        <text>(2R)-3-phosphoglycerate + ATP = (2R)-3-phospho-glyceroyl phosphate + ADP</text>
        <dbReference type="Rhea" id="RHEA:14801"/>
        <dbReference type="ChEBI" id="CHEBI:30616"/>
        <dbReference type="ChEBI" id="CHEBI:57604"/>
        <dbReference type="ChEBI" id="CHEBI:58272"/>
        <dbReference type="ChEBI" id="CHEBI:456216"/>
        <dbReference type="EC" id="2.7.2.3"/>
    </reaction>
</comment>
<comment type="cofactor">
    <cofactor evidence="2">
        <name>Mg(2+)</name>
        <dbReference type="ChEBI" id="CHEBI:18420"/>
    </cofactor>
</comment>
<comment type="pathway">
    <text evidence="2">Carbohydrate degradation; glycolysis; pyruvate from D-glyceraldehyde 3-phosphate: step 2/5.</text>
</comment>
<comment type="subunit">
    <text evidence="1">Monomer.</text>
</comment>
<comment type="subcellular location">
    <subcellularLocation>
        <location evidence="1">Cytoplasm</location>
    </subcellularLocation>
</comment>
<comment type="similarity">
    <text evidence="4">Belongs to the phosphoglycerate kinase family.</text>
</comment>
<proteinExistence type="evidence at transcript level"/>
<organism>
    <name type="scientific">Aplysia californica</name>
    <name type="common">California sea hare</name>
    <dbReference type="NCBI Taxonomy" id="6500"/>
    <lineage>
        <taxon>Eukaryota</taxon>
        <taxon>Metazoa</taxon>
        <taxon>Spiralia</taxon>
        <taxon>Lophotrochozoa</taxon>
        <taxon>Mollusca</taxon>
        <taxon>Gastropoda</taxon>
        <taxon>Heterobranchia</taxon>
        <taxon>Euthyneura</taxon>
        <taxon>Tectipleura</taxon>
        <taxon>Aplysiida</taxon>
        <taxon>Aplysioidea</taxon>
        <taxon>Aplysiidae</taxon>
        <taxon>Aplysia</taxon>
    </lineage>
</organism>
<sequence length="412" mass="43653">MNKLSINDVDVRDKRVLIRVDFNVPLKNGQISNNQRIAAALPTIKLALEKGAKSVVLMSHLGRPDGRPIHAASMKPVVAELENLLGKKIMFLEDCVGSKVEAACANPEPGSVILLENLRFHVEKEGKGKDAQGNKAKADDAAVAAFRASLSKLGDVYVNDAFGTAHRAHSSMVGVDLPVKACGLLMKKELDYFAKALENPARPFLAILGGAKVADKIQLIENLMDKVNEMIIGGGMAFTFLKVLNNMDIGGSLFDEGAKIVGRLVDKAKEKGVKLHLPSDFITGDKFADVAKSATASVASGIPEGWMGLDVGTKTNEVFQKVIEGAKTIVWNGPPGVFEFENFSTGSKQMMDSVVRATEAGTITIIGGCDTATCAKNSNATEKVSHVSTGSGTSLELLEGKILPGVAALSQP</sequence>